<keyword id="KW-0963">Cytoplasm</keyword>
<keyword id="KW-0342">GTP-binding</keyword>
<keyword id="KW-0378">Hydrolase</keyword>
<keyword id="KW-0479">Metal-binding</keyword>
<keyword id="KW-0547">Nucleotide-binding</keyword>
<keyword id="KW-0690">Ribosome biogenesis</keyword>
<keyword id="KW-0694">RNA-binding</keyword>
<keyword id="KW-0699">rRNA-binding</keyword>
<keyword id="KW-0862">Zinc</keyword>
<comment type="function">
    <text evidence="1">One of several proteins that assist in the late maturation steps of the functional core of the 30S ribosomal subunit. Helps release RbfA from mature subunits. May play a role in the assembly of ribosomal proteins into the subunit. Circularly permuted GTPase that catalyzes slow GTP hydrolysis, GTPase activity is stimulated by the 30S ribosomal subunit.</text>
</comment>
<comment type="cofactor">
    <cofactor evidence="1">
        <name>Zn(2+)</name>
        <dbReference type="ChEBI" id="CHEBI:29105"/>
    </cofactor>
    <text evidence="1">Binds 1 zinc ion per subunit.</text>
</comment>
<comment type="subunit">
    <text evidence="1">Monomer. Associates with 30S ribosomal subunit, binds 16S rRNA.</text>
</comment>
<comment type="subcellular location">
    <subcellularLocation>
        <location evidence="1">Cytoplasm</location>
    </subcellularLocation>
</comment>
<comment type="similarity">
    <text evidence="1">Belongs to the TRAFAC class YlqF/YawG GTPase family. RsgA subfamily.</text>
</comment>
<gene>
    <name evidence="1" type="primary">rsgA</name>
    <name type="ordered locus">Cbei_1152</name>
</gene>
<sequence length="290" mass="33308">MNGKIIKGIGGFYYIKTDQGLIECKARGKFRHKDIKPMVGDDVTIKMEHGKGVIEEIHERKSELVRPTVANVSLAFVVFAVKNPDINFDLLNKFLILCEYNNIEVIVCLNKIDLVSEEEREEIKKRINVIGYEVLFINAKKGIGIERLEEKIRGNITVFCGPSGAGKSTLINKLSNKEHMETGNVSVKLGRGKHTTRHSELIEVADGYIVDTPGFSTLEIKDLMDKNSLKYCFPEFTQYNDKCKYRGCLHYKEPNCALKEAVESEKINRYRYEFYVRALEEIIEEEKNKW</sequence>
<accession>A6LSK4</accession>
<feature type="chain" id="PRO_1000188045" description="Small ribosomal subunit biogenesis GTPase RsgA">
    <location>
        <begin position="1"/>
        <end position="290"/>
    </location>
</feature>
<feature type="domain" description="CP-type G" evidence="2">
    <location>
        <begin position="61"/>
        <end position="218"/>
    </location>
</feature>
<feature type="binding site" evidence="1">
    <location>
        <begin position="110"/>
        <end position="113"/>
    </location>
    <ligand>
        <name>GTP</name>
        <dbReference type="ChEBI" id="CHEBI:37565"/>
    </ligand>
</feature>
<feature type="binding site" evidence="1">
    <location>
        <begin position="161"/>
        <end position="169"/>
    </location>
    <ligand>
        <name>GTP</name>
        <dbReference type="ChEBI" id="CHEBI:37565"/>
    </ligand>
</feature>
<feature type="binding site" evidence="1">
    <location>
        <position position="243"/>
    </location>
    <ligand>
        <name>Zn(2+)</name>
        <dbReference type="ChEBI" id="CHEBI:29105"/>
    </ligand>
</feature>
<feature type="binding site" evidence="1">
    <location>
        <position position="248"/>
    </location>
    <ligand>
        <name>Zn(2+)</name>
        <dbReference type="ChEBI" id="CHEBI:29105"/>
    </ligand>
</feature>
<feature type="binding site" evidence="1">
    <location>
        <position position="250"/>
    </location>
    <ligand>
        <name>Zn(2+)</name>
        <dbReference type="ChEBI" id="CHEBI:29105"/>
    </ligand>
</feature>
<feature type="binding site" evidence="1">
    <location>
        <position position="256"/>
    </location>
    <ligand>
        <name>Zn(2+)</name>
        <dbReference type="ChEBI" id="CHEBI:29105"/>
    </ligand>
</feature>
<organism>
    <name type="scientific">Clostridium beijerinckii (strain ATCC 51743 / NCIMB 8052)</name>
    <name type="common">Clostridium acetobutylicum</name>
    <dbReference type="NCBI Taxonomy" id="290402"/>
    <lineage>
        <taxon>Bacteria</taxon>
        <taxon>Bacillati</taxon>
        <taxon>Bacillota</taxon>
        <taxon>Clostridia</taxon>
        <taxon>Eubacteriales</taxon>
        <taxon>Clostridiaceae</taxon>
        <taxon>Clostridium</taxon>
    </lineage>
</organism>
<reference key="1">
    <citation type="submission" date="2007-06" db="EMBL/GenBank/DDBJ databases">
        <title>Complete sequence of Clostridium beijerinckii NCIMB 8052.</title>
        <authorList>
            <consortium name="US DOE Joint Genome Institute"/>
            <person name="Copeland A."/>
            <person name="Lucas S."/>
            <person name="Lapidus A."/>
            <person name="Barry K."/>
            <person name="Detter J.C."/>
            <person name="Glavina del Rio T."/>
            <person name="Hammon N."/>
            <person name="Israni S."/>
            <person name="Dalin E."/>
            <person name="Tice H."/>
            <person name="Pitluck S."/>
            <person name="Sims D."/>
            <person name="Brettin T."/>
            <person name="Bruce D."/>
            <person name="Tapia R."/>
            <person name="Brainard J."/>
            <person name="Schmutz J."/>
            <person name="Larimer F."/>
            <person name="Land M."/>
            <person name="Hauser L."/>
            <person name="Kyrpides N."/>
            <person name="Mikhailova N."/>
            <person name="Bennet G."/>
            <person name="Cann I."/>
            <person name="Chen J.-S."/>
            <person name="Contreras A.L."/>
            <person name="Jones D."/>
            <person name="Kashket E."/>
            <person name="Mitchell W."/>
            <person name="Stoddard S."/>
            <person name="Schwarz W."/>
            <person name="Qureshi N."/>
            <person name="Young M."/>
            <person name="Shi Z."/>
            <person name="Ezeji T."/>
            <person name="White B."/>
            <person name="Blaschek H."/>
            <person name="Richardson P."/>
        </authorList>
    </citation>
    <scope>NUCLEOTIDE SEQUENCE [LARGE SCALE GENOMIC DNA]</scope>
    <source>
        <strain>ATCC 51743 / NCIMB 8052</strain>
    </source>
</reference>
<proteinExistence type="inferred from homology"/>
<dbReference type="EC" id="3.6.1.-" evidence="1"/>
<dbReference type="EMBL" id="CP000721">
    <property type="protein sequence ID" value="ABR33334.1"/>
    <property type="molecule type" value="Genomic_DNA"/>
</dbReference>
<dbReference type="RefSeq" id="WP_011968492.1">
    <property type="nucleotide sequence ID" value="NC_009617.1"/>
</dbReference>
<dbReference type="SMR" id="A6LSK4"/>
<dbReference type="KEGG" id="cbe:Cbei_1152"/>
<dbReference type="eggNOG" id="COG1162">
    <property type="taxonomic scope" value="Bacteria"/>
</dbReference>
<dbReference type="HOGENOM" id="CLU_033617_2_1_9"/>
<dbReference type="Proteomes" id="UP000000565">
    <property type="component" value="Chromosome"/>
</dbReference>
<dbReference type="GO" id="GO:0005737">
    <property type="term" value="C:cytoplasm"/>
    <property type="evidence" value="ECO:0007669"/>
    <property type="project" value="UniProtKB-SubCell"/>
</dbReference>
<dbReference type="GO" id="GO:0005525">
    <property type="term" value="F:GTP binding"/>
    <property type="evidence" value="ECO:0007669"/>
    <property type="project" value="UniProtKB-UniRule"/>
</dbReference>
<dbReference type="GO" id="GO:0003924">
    <property type="term" value="F:GTPase activity"/>
    <property type="evidence" value="ECO:0007669"/>
    <property type="project" value="UniProtKB-UniRule"/>
</dbReference>
<dbReference type="GO" id="GO:0046872">
    <property type="term" value="F:metal ion binding"/>
    <property type="evidence" value="ECO:0007669"/>
    <property type="project" value="UniProtKB-KW"/>
</dbReference>
<dbReference type="GO" id="GO:0019843">
    <property type="term" value="F:rRNA binding"/>
    <property type="evidence" value="ECO:0007669"/>
    <property type="project" value="UniProtKB-KW"/>
</dbReference>
<dbReference type="GO" id="GO:0042274">
    <property type="term" value="P:ribosomal small subunit biogenesis"/>
    <property type="evidence" value="ECO:0007669"/>
    <property type="project" value="UniProtKB-UniRule"/>
</dbReference>
<dbReference type="CDD" id="cd04466">
    <property type="entry name" value="S1_YloQ_GTPase"/>
    <property type="match status" value="1"/>
</dbReference>
<dbReference type="CDD" id="cd01854">
    <property type="entry name" value="YjeQ_EngC"/>
    <property type="match status" value="1"/>
</dbReference>
<dbReference type="Gene3D" id="2.40.50.140">
    <property type="entry name" value="Nucleic acid-binding proteins"/>
    <property type="match status" value="1"/>
</dbReference>
<dbReference type="Gene3D" id="3.40.50.300">
    <property type="entry name" value="P-loop containing nucleotide triphosphate hydrolases"/>
    <property type="match status" value="1"/>
</dbReference>
<dbReference type="Gene3D" id="1.10.40.50">
    <property type="entry name" value="Probable gtpase engc, domain 3"/>
    <property type="match status" value="1"/>
</dbReference>
<dbReference type="HAMAP" id="MF_01820">
    <property type="entry name" value="GTPase_RsgA"/>
    <property type="match status" value="1"/>
</dbReference>
<dbReference type="InterPro" id="IPR030378">
    <property type="entry name" value="G_CP_dom"/>
</dbReference>
<dbReference type="InterPro" id="IPR012340">
    <property type="entry name" value="NA-bd_OB-fold"/>
</dbReference>
<dbReference type="InterPro" id="IPR027417">
    <property type="entry name" value="P-loop_NTPase"/>
</dbReference>
<dbReference type="InterPro" id="IPR004881">
    <property type="entry name" value="Ribosome_biogen_GTPase_RsgA"/>
</dbReference>
<dbReference type="InterPro" id="IPR010914">
    <property type="entry name" value="RsgA_GTPase_dom"/>
</dbReference>
<dbReference type="InterPro" id="IPR031944">
    <property type="entry name" value="RsgA_N"/>
</dbReference>
<dbReference type="NCBIfam" id="TIGR00157">
    <property type="entry name" value="ribosome small subunit-dependent GTPase A"/>
    <property type="match status" value="1"/>
</dbReference>
<dbReference type="PANTHER" id="PTHR32120">
    <property type="entry name" value="SMALL RIBOSOMAL SUBUNIT BIOGENESIS GTPASE RSGA"/>
    <property type="match status" value="1"/>
</dbReference>
<dbReference type="PANTHER" id="PTHR32120:SF11">
    <property type="entry name" value="SMALL RIBOSOMAL SUBUNIT BIOGENESIS GTPASE RSGA 1, MITOCHONDRIAL-RELATED"/>
    <property type="match status" value="1"/>
</dbReference>
<dbReference type="Pfam" id="PF03193">
    <property type="entry name" value="RsgA_GTPase"/>
    <property type="match status" value="1"/>
</dbReference>
<dbReference type="Pfam" id="PF16745">
    <property type="entry name" value="RsgA_N"/>
    <property type="match status" value="1"/>
</dbReference>
<dbReference type="SUPFAM" id="SSF50249">
    <property type="entry name" value="Nucleic acid-binding proteins"/>
    <property type="match status" value="1"/>
</dbReference>
<dbReference type="SUPFAM" id="SSF52540">
    <property type="entry name" value="P-loop containing nucleoside triphosphate hydrolases"/>
    <property type="match status" value="1"/>
</dbReference>
<dbReference type="PROSITE" id="PS50936">
    <property type="entry name" value="ENGC_GTPASE"/>
    <property type="match status" value="1"/>
</dbReference>
<dbReference type="PROSITE" id="PS51721">
    <property type="entry name" value="G_CP"/>
    <property type="match status" value="1"/>
</dbReference>
<evidence type="ECO:0000255" key="1">
    <source>
        <dbReference type="HAMAP-Rule" id="MF_01820"/>
    </source>
</evidence>
<evidence type="ECO:0000255" key="2">
    <source>
        <dbReference type="PROSITE-ProRule" id="PRU01058"/>
    </source>
</evidence>
<name>RSGA_CLOB8</name>
<protein>
    <recommendedName>
        <fullName evidence="1">Small ribosomal subunit biogenesis GTPase RsgA</fullName>
        <ecNumber evidence="1">3.6.1.-</ecNumber>
    </recommendedName>
</protein>